<feature type="chain" id="PRO_0000190861" description="Probable endonuclease 4">
    <location>
        <begin position="1"/>
        <end position="297"/>
    </location>
</feature>
<feature type="binding site" evidence="1">
    <location>
        <position position="69"/>
    </location>
    <ligand>
        <name>Zn(2+)</name>
        <dbReference type="ChEBI" id="CHEBI:29105"/>
        <label>1</label>
    </ligand>
</feature>
<feature type="binding site" evidence="1">
    <location>
        <position position="110"/>
    </location>
    <ligand>
        <name>Zn(2+)</name>
        <dbReference type="ChEBI" id="CHEBI:29105"/>
        <label>1</label>
    </ligand>
</feature>
<feature type="binding site" evidence="1">
    <location>
        <position position="145"/>
    </location>
    <ligand>
        <name>Zn(2+)</name>
        <dbReference type="ChEBI" id="CHEBI:29105"/>
        <label>1</label>
    </ligand>
</feature>
<feature type="binding site" evidence="1">
    <location>
        <position position="145"/>
    </location>
    <ligand>
        <name>Zn(2+)</name>
        <dbReference type="ChEBI" id="CHEBI:29105"/>
        <label>2</label>
    </ligand>
</feature>
<feature type="binding site" evidence="1">
    <location>
        <position position="179"/>
    </location>
    <ligand>
        <name>Zn(2+)</name>
        <dbReference type="ChEBI" id="CHEBI:29105"/>
        <label>2</label>
    </ligand>
</feature>
<feature type="binding site" evidence="1">
    <location>
        <position position="182"/>
    </location>
    <ligand>
        <name>Zn(2+)</name>
        <dbReference type="ChEBI" id="CHEBI:29105"/>
        <label>3</label>
    </ligand>
</feature>
<feature type="binding site" evidence="1">
    <location>
        <position position="214"/>
    </location>
    <ligand>
        <name>Zn(2+)</name>
        <dbReference type="ChEBI" id="CHEBI:29105"/>
        <label>2</label>
    </ligand>
</feature>
<feature type="binding site" evidence="1">
    <location>
        <position position="227"/>
    </location>
    <ligand>
        <name>Zn(2+)</name>
        <dbReference type="ChEBI" id="CHEBI:29105"/>
        <label>3</label>
    </ligand>
</feature>
<feature type="binding site" evidence="1">
    <location>
        <position position="229"/>
    </location>
    <ligand>
        <name>Zn(2+)</name>
        <dbReference type="ChEBI" id="CHEBI:29105"/>
        <label>3</label>
    </ligand>
</feature>
<feature type="binding site" evidence="1">
    <location>
        <position position="259"/>
    </location>
    <ligand>
        <name>Zn(2+)</name>
        <dbReference type="ChEBI" id="CHEBI:29105"/>
        <label>2</label>
    </ligand>
</feature>
<comment type="function">
    <text evidence="1">Endonuclease IV plays a role in DNA repair. It cleaves phosphodiester bonds at apurinic or apyrimidinic (AP) sites, generating a 3'-hydroxyl group and a 5'-terminal sugar phosphate.</text>
</comment>
<comment type="catalytic activity">
    <reaction evidence="1">
        <text>Endonucleolytic cleavage to 5'-phosphooligonucleotide end-products.</text>
        <dbReference type="EC" id="3.1.21.2"/>
    </reaction>
</comment>
<comment type="cofactor">
    <cofactor evidence="1">
        <name>Zn(2+)</name>
        <dbReference type="ChEBI" id="CHEBI:29105"/>
    </cofactor>
    <text evidence="1">Binds 3 Zn(2+) ions.</text>
</comment>
<comment type="similarity">
    <text evidence="1">Belongs to the AP endonuclease 2 family.</text>
</comment>
<name>END4_OCEIH</name>
<gene>
    <name evidence="1" type="primary">nfo</name>
    <name type="ordered locus">OB1938</name>
</gene>
<accession>Q8EPZ2</accession>
<keyword id="KW-0227">DNA damage</keyword>
<keyword id="KW-0234">DNA repair</keyword>
<keyword id="KW-0255">Endonuclease</keyword>
<keyword id="KW-0378">Hydrolase</keyword>
<keyword id="KW-0479">Metal-binding</keyword>
<keyword id="KW-0540">Nuclease</keyword>
<keyword id="KW-1185">Reference proteome</keyword>
<keyword id="KW-0862">Zinc</keyword>
<protein>
    <recommendedName>
        <fullName evidence="1">Probable endonuclease 4</fullName>
        <ecNumber evidence="1">3.1.21.2</ecNumber>
    </recommendedName>
    <alternativeName>
        <fullName evidence="1">Endodeoxyribonuclease IV</fullName>
    </alternativeName>
    <alternativeName>
        <fullName evidence="1">Endonuclease IV</fullName>
    </alternativeName>
</protein>
<evidence type="ECO:0000255" key="1">
    <source>
        <dbReference type="HAMAP-Rule" id="MF_00152"/>
    </source>
</evidence>
<sequence length="297" mass="32919">MVKIGSHVSMNGKKMLLGSSEDAVQYGANTFMIYTGAPQNTRRKPIEELNIEAGTEHMKANGIQDIVVHAPYIINIGNSIKPATFELGVNFLKNEIDRTEALGAKQIVLHPGAHVGEGAEKGIPKIIEGLNEVLDPNSNVQIALETMAGKGSEIGRTFEELAQIIEGVTHNDRLSICMDTCHIHDAGYNIVEDFDGVLEQFDKIIGIDRLKVVHVNDSKNERGAHKDRHENIGFGYIGFEALHNIVHHPQLSDLPKILETPFVGTDKKNKKPPYKHEIEMLKEGNFDPHLKEKIMEA</sequence>
<proteinExistence type="inferred from homology"/>
<reference key="1">
    <citation type="journal article" date="2002" name="Nucleic Acids Res.">
        <title>Genome sequence of Oceanobacillus iheyensis isolated from the Iheya Ridge and its unexpected adaptive capabilities to extreme environments.</title>
        <authorList>
            <person name="Takami H."/>
            <person name="Takaki Y."/>
            <person name="Uchiyama I."/>
        </authorList>
    </citation>
    <scope>NUCLEOTIDE SEQUENCE [LARGE SCALE GENOMIC DNA]</scope>
    <source>
        <strain>DSM 14371 / CIP 107618 / JCM 11309 / KCTC 3954 / HTE831</strain>
    </source>
</reference>
<dbReference type="EC" id="3.1.21.2" evidence="1"/>
<dbReference type="EMBL" id="BA000028">
    <property type="protein sequence ID" value="BAC13894.1"/>
    <property type="molecule type" value="Genomic_DNA"/>
</dbReference>
<dbReference type="RefSeq" id="WP_011066335.1">
    <property type="nucleotide sequence ID" value="NC_004193.1"/>
</dbReference>
<dbReference type="SMR" id="Q8EPZ2"/>
<dbReference type="STRING" id="221109.gene:10734184"/>
<dbReference type="KEGG" id="oih:OB1938"/>
<dbReference type="eggNOG" id="COG0648">
    <property type="taxonomic scope" value="Bacteria"/>
</dbReference>
<dbReference type="HOGENOM" id="CLU_025885_4_1_9"/>
<dbReference type="OrthoDB" id="9805666at2"/>
<dbReference type="PhylomeDB" id="Q8EPZ2"/>
<dbReference type="Proteomes" id="UP000000822">
    <property type="component" value="Chromosome"/>
</dbReference>
<dbReference type="GO" id="GO:0008833">
    <property type="term" value="F:deoxyribonuclease IV (phage-T4-induced) activity"/>
    <property type="evidence" value="ECO:0007669"/>
    <property type="project" value="UniProtKB-UniRule"/>
</dbReference>
<dbReference type="GO" id="GO:0003677">
    <property type="term" value="F:DNA binding"/>
    <property type="evidence" value="ECO:0007669"/>
    <property type="project" value="InterPro"/>
</dbReference>
<dbReference type="GO" id="GO:0003906">
    <property type="term" value="F:DNA-(apurinic or apyrimidinic site) endonuclease activity"/>
    <property type="evidence" value="ECO:0007669"/>
    <property type="project" value="TreeGrafter"/>
</dbReference>
<dbReference type="GO" id="GO:0008081">
    <property type="term" value="F:phosphoric diester hydrolase activity"/>
    <property type="evidence" value="ECO:0007669"/>
    <property type="project" value="TreeGrafter"/>
</dbReference>
<dbReference type="GO" id="GO:0008270">
    <property type="term" value="F:zinc ion binding"/>
    <property type="evidence" value="ECO:0007669"/>
    <property type="project" value="UniProtKB-UniRule"/>
</dbReference>
<dbReference type="GO" id="GO:0006284">
    <property type="term" value="P:base-excision repair"/>
    <property type="evidence" value="ECO:0007669"/>
    <property type="project" value="TreeGrafter"/>
</dbReference>
<dbReference type="CDD" id="cd00019">
    <property type="entry name" value="AP2Ec"/>
    <property type="match status" value="1"/>
</dbReference>
<dbReference type="FunFam" id="3.20.20.150:FF:000001">
    <property type="entry name" value="Probable endonuclease 4"/>
    <property type="match status" value="1"/>
</dbReference>
<dbReference type="Gene3D" id="3.20.20.150">
    <property type="entry name" value="Divalent-metal-dependent TIM barrel enzymes"/>
    <property type="match status" value="1"/>
</dbReference>
<dbReference type="HAMAP" id="MF_00152">
    <property type="entry name" value="Nfo"/>
    <property type="match status" value="1"/>
</dbReference>
<dbReference type="InterPro" id="IPR001719">
    <property type="entry name" value="AP_endonuc_2"/>
</dbReference>
<dbReference type="InterPro" id="IPR018246">
    <property type="entry name" value="AP_endonuc_F2_Zn_BS"/>
</dbReference>
<dbReference type="InterPro" id="IPR036237">
    <property type="entry name" value="Xyl_isomerase-like_sf"/>
</dbReference>
<dbReference type="InterPro" id="IPR013022">
    <property type="entry name" value="Xyl_isomerase-like_TIM-brl"/>
</dbReference>
<dbReference type="NCBIfam" id="TIGR00587">
    <property type="entry name" value="nfo"/>
    <property type="match status" value="1"/>
</dbReference>
<dbReference type="NCBIfam" id="NF002196">
    <property type="entry name" value="PRK01060.1-1"/>
    <property type="match status" value="1"/>
</dbReference>
<dbReference type="PANTHER" id="PTHR21445:SF0">
    <property type="entry name" value="APURINIC-APYRIMIDINIC ENDONUCLEASE"/>
    <property type="match status" value="1"/>
</dbReference>
<dbReference type="PANTHER" id="PTHR21445">
    <property type="entry name" value="ENDONUCLEASE IV ENDODEOXYRIBONUCLEASE IV"/>
    <property type="match status" value="1"/>
</dbReference>
<dbReference type="Pfam" id="PF01261">
    <property type="entry name" value="AP_endonuc_2"/>
    <property type="match status" value="1"/>
</dbReference>
<dbReference type="SMART" id="SM00518">
    <property type="entry name" value="AP2Ec"/>
    <property type="match status" value="1"/>
</dbReference>
<dbReference type="SUPFAM" id="SSF51658">
    <property type="entry name" value="Xylose isomerase-like"/>
    <property type="match status" value="1"/>
</dbReference>
<dbReference type="PROSITE" id="PS00729">
    <property type="entry name" value="AP_NUCLEASE_F2_1"/>
    <property type="match status" value="1"/>
</dbReference>
<dbReference type="PROSITE" id="PS00730">
    <property type="entry name" value="AP_NUCLEASE_F2_2"/>
    <property type="match status" value="1"/>
</dbReference>
<dbReference type="PROSITE" id="PS00731">
    <property type="entry name" value="AP_NUCLEASE_F2_3"/>
    <property type="match status" value="1"/>
</dbReference>
<dbReference type="PROSITE" id="PS51432">
    <property type="entry name" value="AP_NUCLEASE_F2_4"/>
    <property type="match status" value="1"/>
</dbReference>
<organism>
    <name type="scientific">Oceanobacillus iheyensis (strain DSM 14371 / CIP 107618 / JCM 11309 / KCTC 3954 / HTE831)</name>
    <dbReference type="NCBI Taxonomy" id="221109"/>
    <lineage>
        <taxon>Bacteria</taxon>
        <taxon>Bacillati</taxon>
        <taxon>Bacillota</taxon>
        <taxon>Bacilli</taxon>
        <taxon>Bacillales</taxon>
        <taxon>Bacillaceae</taxon>
        <taxon>Oceanobacillus</taxon>
    </lineage>
</organism>